<name>GDPD6_ARATH</name>
<sequence length="372" mass="42882">MAFKYLLPLLLLSLLVANCASRPLYRLPSEAKHATKKPLQTSRPYNLAHRGSNGELPEETAPAYMRAIEEGADFIETDILSSKDGVLICHHDVNLDDTTDVADHKEFADRKRTYEVQGMNMTGFFTVDFTLKELKTLGAKQRYPFRDQQYNGKFPIITFDEYISIALDAPRVVGIYPEIKNPVFMNQQVKWADGKKFEDKFVETLKKYGYKGSYLSEDWLKQPIFIQSFAATSLVYISNMTDSPKLFLIDDVTILTEDTNKTYAEITSDAYLDYIKPYVIGIGPWKDTIVPVNNNRLMTPTDLVARAHSRNLQVHPYTYRNENQFLHLEFNQDPYLEYDYWLNKIGVDGLFTDFTGSLHNYQELKSPLPQQQ</sequence>
<feature type="signal peptide" evidence="2">
    <location>
        <begin position="1"/>
        <end position="21"/>
    </location>
</feature>
<feature type="chain" id="PRO_0000430613" description="Glycerophosphodiester phosphodiesterase GDPD6" evidence="2">
    <location>
        <begin position="22"/>
        <end position="372"/>
    </location>
</feature>
<feature type="domain" description="GP-PDE" evidence="2">
    <location>
        <begin position="44"/>
        <end position="362"/>
    </location>
</feature>
<feature type="region of interest" description="Disordered" evidence="4">
    <location>
        <begin position="32"/>
        <end position="58"/>
    </location>
</feature>
<feature type="glycosylation site" description="N-linked (GlcNAc...) asparagine" evidence="3">
    <location>
        <position position="120"/>
    </location>
</feature>
<feature type="glycosylation site" description="N-linked (GlcNAc...) asparagine" evidence="3">
    <location>
        <position position="239"/>
    </location>
</feature>
<feature type="glycosylation site" description="N-linked (GlcNAc...) asparagine" evidence="3">
    <location>
        <position position="260"/>
    </location>
</feature>
<organism>
    <name type="scientific">Arabidopsis thaliana</name>
    <name type="common">Mouse-ear cress</name>
    <dbReference type="NCBI Taxonomy" id="3702"/>
    <lineage>
        <taxon>Eukaryota</taxon>
        <taxon>Viridiplantae</taxon>
        <taxon>Streptophyta</taxon>
        <taxon>Embryophyta</taxon>
        <taxon>Tracheophyta</taxon>
        <taxon>Spermatophyta</taxon>
        <taxon>Magnoliopsida</taxon>
        <taxon>eudicotyledons</taxon>
        <taxon>Gunneridae</taxon>
        <taxon>Pentapetalae</taxon>
        <taxon>rosids</taxon>
        <taxon>malvids</taxon>
        <taxon>Brassicales</taxon>
        <taxon>Brassicaceae</taxon>
        <taxon>Camelineae</taxon>
        <taxon>Arabidopsis</taxon>
    </lineage>
</organism>
<keyword id="KW-0319">Glycerol metabolism</keyword>
<keyword id="KW-0325">Glycoprotein</keyword>
<keyword id="KW-0378">Hydrolase</keyword>
<keyword id="KW-1185">Reference proteome</keyword>
<keyword id="KW-0732">Signal</keyword>
<protein>
    <recommendedName>
        <fullName evidence="7">Glycerophosphodiester phosphodiesterase GDPD6</fullName>
        <ecNumber evidence="1">3.1.4.46</ecNumber>
    </recommendedName>
    <alternativeName>
        <fullName evidence="6">Glycerophosphodiester phosphodiesterase 6</fullName>
        <shortName evidence="6">ATGDPD6</shortName>
    </alternativeName>
</protein>
<accession>Q9SD81</accession>
<reference key="1">
    <citation type="journal article" date="2000" name="Nature">
        <title>Sequence and analysis of chromosome 5 of the plant Arabidopsis thaliana.</title>
        <authorList>
            <person name="Tabata S."/>
            <person name="Kaneko T."/>
            <person name="Nakamura Y."/>
            <person name="Kotani H."/>
            <person name="Kato T."/>
            <person name="Asamizu E."/>
            <person name="Miyajima N."/>
            <person name="Sasamoto S."/>
            <person name="Kimura T."/>
            <person name="Hosouchi T."/>
            <person name="Kawashima K."/>
            <person name="Kohara M."/>
            <person name="Matsumoto M."/>
            <person name="Matsuno A."/>
            <person name="Muraki A."/>
            <person name="Nakayama S."/>
            <person name="Nakazaki N."/>
            <person name="Naruo K."/>
            <person name="Okumura S."/>
            <person name="Shinpo S."/>
            <person name="Takeuchi C."/>
            <person name="Wada T."/>
            <person name="Watanabe A."/>
            <person name="Yamada M."/>
            <person name="Yasuda M."/>
            <person name="Sato S."/>
            <person name="de la Bastide M."/>
            <person name="Huang E."/>
            <person name="Spiegel L."/>
            <person name="Gnoj L."/>
            <person name="O'Shaughnessy A."/>
            <person name="Preston R."/>
            <person name="Habermann K."/>
            <person name="Murray J."/>
            <person name="Johnson D."/>
            <person name="Rohlfing T."/>
            <person name="Nelson J."/>
            <person name="Stoneking T."/>
            <person name="Pepin K."/>
            <person name="Spieth J."/>
            <person name="Sekhon M."/>
            <person name="Armstrong J."/>
            <person name="Becker M."/>
            <person name="Belter E."/>
            <person name="Cordum H."/>
            <person name="Cordes M."/>
            <person name="Courtney L."/>
            <person name="Courtney W."/>
            <person name="Dante M."/>
            <person name="Du H."/>
            <person name="Edwards J."/>
            <person name="Fryman J."/>
            <person name="Haakensen B."/>
            <person name="Lamar E."/>
            <person name="Latreille P."/>
            <person name="Leonard S."/>
            <person name="Meyer R."/>
            <person name="Mulvaney E."/>
            <person name="Ozersky P."/>
            <person name="Riley A."/>
            <person name="Strowmatt C."/>
            <person name="Wagner-McPherson C."/>
            <person name="Wollam A."/>
            <person name="Yoakum M."/>
            <person name="Bell M."/>
            <person name="Dedhia N."/>
            <person name="Parnell L."/>
            <person name="Shah R."/>
            <person name="Rodriguez M."/>
            <person name="Hoon See L."/>
            <person name="Vil D."/>
            <person name="Baker J."/>
            <person name="Kirchoff K."/>
            <person name="Toth K."/>
            <person name="King L."/>
            <person name="Bahret A."/>
            <person name="Miller B."/>
            <person name="Marra M.A."/>
            <person name="Martienssen R."/>
            <person name="McCombie W.R."/>
            <person name="Wilson R.K."/>
            <person name="Murphy G."/>
            <person name="Bancroft I."/>
            <person name="Volckaert G."/>
            <person name="Wambutt R."/>
            <person name="Duesterhoeft A."/>
            <person name="Stiekema W."/>
            <person name="Pohl T."/>
            <person name="Entian K.-D."/>
            <person name="Terryn N."/>
            <person name="Hartley N."/>
            <person name="Bent E."/>
            <person name="Johnson S."/>
            <person name="Langham S.-A."/>
            <person name="McCullagh B."/>
            <person name="Robben J."/>
            <person name="Grymonprez B."/>
            <person name="Zimmermann W."/>
            <person name="Ramsperger U."/>
            <person name="Wedler H."/>
            <person name="Balke K."/>
            <person name="Wedler E."/>
            <person name="Peters S."/>
            <person name="van Staveren M."/>
            <person name="Dirkse W."/>
            <person name="Mooijman P."/>
            <person name="Klein Lankhorst R."/>
            <person name="Weitzenegger T."/>
            <person name="Bothe G."/>
            <person name="Rose M."/>
            <person name="Hauf J."/>
            <person name="Berneiser S."/>
            <person name="Hempel S."/>
            <person name="Feldpausch M."/>
            <person name="Lamberth S."/>
            <person name="Villarroel R."/>
            <person name="Gielen J."/>
            <person name="Ardiles W."/>
            <person name="Bents O."/>
            <person name="Lemcke K."/>
            <person name="Kolesov G."/>
            <person name="Mayer K.F.X."/>
            <person name="Rudd S."/>
            <person name="Schoof H."/>
            <person name="Schueller C."/>
            <person name="Zaccaria P."/>
            <person name="Mewes H.-W."/>
            <person name="Bevan M."/>
            <person name="Fransz P.F."/>
        </authorList>
    </citation>
    <scope>NUCLEOTIDE SEQUENCE [LARGE SCALE GENOMIC DNA]</scope>
    <source>
        <strain>cv. Columbia</strain>
    </source>
</reference>
<reference key="2">
    <citation type="journal article" date="2017" name="Plant J.">
        <title>Araport11: a complete reannotation of the Arabidopsis thaliana reference genome.</title>
        <authorList>
            <person name="Cheng C.Y."/>
            <person name="Krishnakumar V."/>
            <person name="Chan A.P."/>
            <person name="Thibaud-Nissen F."/>
            <person name="Schobel S."/>
            <person name="Town C.D."/>
        </authorList>
    </citation>
    <scope>GENOME REANNOTATION</scope>
    <source>
        <strain>cv. Columbia</strain>
    </source>
</reference>
<reference key="3">
    <citation type="submission" date="2005-05" db="EMBL/GenBank/DDBJ databases">
        <title>Arabidopsis ORF clones.</title>
        <authorList>
            <person name="Cheuk R.F."/>
            <person name="Chen H."/>
            <person name="Kim C.J."/>
            <person name="Shinn P."/>
            <person name="Ecker J.R."/>
        </authorList>
    </citation>
    <scope>NUCLEOTIDE SEQUENCE [LARGE SCALE MRNA]</scope>
    <source>
        <strain>cv. Columbia</strain>
    </source>
</reference>
<reference key="4">
    <citation type="journal article" date="2011" name="Plant J.">
        <title>Characterization of the Arabidopsis glycerophosphodiester phosphodiesterase (GDPD) family reveals a role of the plastid-localized AtGDPD1 in maintaining cellular phosphate homeostasis under phosphate starvation.</title>
        <authorList>
            <person name="Cheng Y."/>
            <person name="Zhou W."/>
            <person name="El Sheery N.I."/>
            <person name="Peters C."/>
            <person name="Li M."/>
            <person name="Wang X."/>
            <person name="Huang J."/>
        </authorList>
    </citation>
    <scope>TISSUE SPECIFICITY</scope>
    <scope>INDUCTION</scope>
    <scope>GENE FAMILY</scope>
    <scope>NOMENCLATURE</scope>
</reference>
<gene>
    <name evidence="6" type="primary">GDPD6</name>
    <name evidence="8" type="ordered locus">At5g08030</name>
    <name evidence="9" type="ORF">F13G24.230</name>
</gene>
<evidence type="ECO:0000250" key="1">
    <source>
        <dbReference type="UniProtKB" id="Q9SGA2"/>
    </source>
</evidence>
<evidence type="ECO:0000255" key="2"/>
<evidence type="ECO:0000255" key="3">
    <source>
        <dbReference type="PROSITE-ProRule" id="PRU00498"/>
    </source>
</evidence>
<evidence type="ECO:0000256" key="4">
    <source>
        <dbReference type="SAM" id="MobiDB-lite"/>
    </source>
</evidence>
<evidence type="ECO:0000269" key="5">
    <source>
    </source>
</evidence>
<evidence type="ECO:0000303" key="6">
    <source>
    </source>
</evidence>
<evidence type="ECO:0000305" key="7"/>
<evidence type="ECO:0000312" key="8">
    <source>
        <dbReference type="Araport" id="AT5G08030"/>
    </source>
</evidence>
<evidence type="ECO:0000312" key="9">
    <source>
        <dbReference type="EMBL" id="CAB62615.1"/>
    </source>
</evidence>
<dbReference type="EC" id="3.1.4.46" evidence="1"/>
<dbReference type="EMBL" id="AL133421">
    <property type="protein sequence ID" value="CAB62615.1"/>
    <property type="molecule type" value="Genomic_DNA"/>
</dbReference>
<dbReference type="EMBL" id="CP002688">
    <property type="protein sequence ID" value="AED91236.1"/>
    <property type="molecule type" value="Genomic_DNA"/>
</dbReference>
<dbReference type="EMBL" id="BT023450">
    <property type="protein sequence ID" value="AAY56441.1"/>
    <property type="molecule type" value="mRNA"/>
</dbReference>
<dbReference type="PIR" id="T45628">
    <property type="entry name" value="T45628"/>
</dbReference>
<dbReference type="RefSeq" id="NP_196420.1">
    <property type="nucleotide sequence ID" value="NM_120885.4"/>
</dbReference>
<dbReference type="SMR" id="Q9SD81"/>
<dbReference type="FunCoup" id="Q9SD81">
    <property type="interactions" value="2"/>
</dbReference>
<dbReference type="STRING" id="3702.Q9SD81"/>
<dbReference type="GlyCosmos" id="Q9SD81">
    <property type="glycosylation" value="3 sites, No reported glycans"/>
</dbReference>
<dbReference type="GlyGen" id="Q9SD81">
    <property type="glycosylation" value="3 sites"/>
</dbReference>
<dbReference type="PaxDb" id="3702-AT5G08030.1"/>
<dbReference type="ProteomicsDB" id="247119"/>
<dbReference type="EnsemblPlants" id="AT5G08030.1">
    <property type="protein sequence ID" value="AT5G08030.1"/>
    <property type="gene ID" value="AT5G08030"/>
</dbReference>
<dbReference type="GeneID" id="830697"/>
<dbReference type="Gramene" id="AT5G08030.1">
    <property type="protein sequence ID" value="AT5G08030.1"/>
    <property type="gene ID" value="AT5G08030"/>
</dbReference>
<dbReference type="KEGG" id="ath:AT5G08030"/>
<dbReference type="Araport" id="AT5G08030"/>
<dbReference type="TAIR" id="AT5G08030">
    <property type="gene designation" value="GDPD6"/>
</dbReference>
<dbReference type="eggNOG" id="KOG2258">
    <property type="taxonomic scope" value="Eukaryota"/>
</dbReference>
<dbReference type="HOGENOM" id="CLU_030226_4_1_1"/>
<dbReference type="InParanoid" id="Q9SD81"/>
<dbReference type="OrthoDB" id="1058301at2759"/>
<dbReference type="PhylomeDB" id="Q9SD81"/>
<dbReference type="PRO" id="PR:Q9SD81"/>
<dbReference type="Proteomes" id="UP000006548">
    <property type="component" value="Chromosome 5"/>
</dbReference>
<dbReference type="ExpressionAtlas" id="Q9SD81">
    <property type="expression patterns" value="baseline and differential"/>
</dbReference>
<dbReference type="GO" id="GO:0008889">
    <property type="term" value="F:glycerophosphodiester phosphodiesterase activity"/>
    <property type="evidence" value="ECO:0007669"/>
    <property type="project" value="UniProtKB-EC"/>
</dbReference>
<dbReference type="GO" id="GO:0006071">
    <property type="term" value="P:glycerol metabolic process"/>
    <property type="evidence" value="ECO:0007669"/>
    <property type="project" value="UniProtKB-KW"/>
</dbReference>
<dbReference type="GO" id="GO:0006629">
    <property type="term" value="P:lipid metabolic process"/>
    <property type="evidence" value="ECO:0007669"/>
    <property type="project" value="InterPro"/>
</dbReference>
<dbReference type="CDD" id="cd08602">
    <property type="entry name" value="GDPD_ScGlpQ1_like"/>
    <property type="match status" value="1"/>
</dbReference>
<dbReference type="FunFam" id="3.20.20.190:FF:000023">
    <property type="entry name" value="Glycerophosphodiester phosphodiesterase GDPD5"/>
    <property type="match status" value="1"/>
</dbReference>
<dbReference type="Gene3D" id="3.20.20.190">
    <property type="entry name" value="Phosphatidylinositol (PI) phosphodiesterase"/>
    <property type="match status" value="1"/>
</dbReference>
<dbReference type="InterPro" id="IPR030395">
    <property type="entry name" value="GP_PDE_dom"/>
</dbReference>
<dbReference type="InterPro" id="IPR017946">
    <property type="entry name" value="PLC-like_Pdiesterase_TIM-brl"/>
</dbReference>
<dbReference type="PANTHER" id="PTHR43620:SF43">
    <property type="entry name" value="GLYCEROPHOSPHODIESTER PHOSPHODIESTERASE GDPD6"/>
    <property type="match status" value="1"/>
</dbReference>
<dbReference type="PANTHER" id="PTHR43620">
    <property type="entry name" value="GLYCEROPHOSPHORYL DIESTER PHOSPHODIESTERASE"/>
    <property type="match status" value="1"/>
</dbReference>
<dbReference type="Pfam" id="PF03009">
    <property type="entry name" value="GDPD"/>
    <property type="match status" value="1"/>
</dbReference>
<dbReference type="SUPFAM" id="SSF51695">
    <property type="entry name" value="PLC-like phosphodiesterases"/>
    <property type="match status" value="1"/>
</dbReference>
<dbReference type="PROSITE" id="PS51704">
    <property type="entry name" value="GP_PDE"/>
    <property type="match status" value="1"/>
</dbReference>
<comment type="catalytic activity">
    <reaction evidence="1">
        <text>a sn-glycero-3-phosphodiester + H2O = an alcohol + sn-glycerol 3-phosphate + H(+)</text>
        <dbReference type="Rhea" id="RHEA:12969"/>
        <dbReference type="ChEBI" id="CHEBI:15377"/>
        <dbReference type="ChEBI" id="CHEBI:15378"/>
        <dbReference type="ChEBI" id="CHEBI:30879"/>
        <dbReference type="ChEBI" id="CHEBI:57597"/>
        <dbReference type="ChEBI" id="CHEBI:83408"/>
        <dbReference type="EC" id="3.1.4.46"/>
    </reaction>
</comment>
<comment type="tissue specificity">
    <text evidence="5">Expressed in flowers and siliques.</text>
</comment>
<comment type="induction">
    <text evidence="5">By phosphate starvation.</text>
</comment>
<comment type="similarity">
    <text evidence="7">Belongs to the glycerophosphoryl diester phosphodiesterase family.</text>
</comment>
<proteinExistence type="evidence at transcript level"/>